<feature type="chain" id="PRO_0000331575" description="Insulinoma-associated protein 1">
    <location>
        <begin position="1"/>
        <end position="522"/>
    </location>
</feature>
<feature type="zinc finger region" description="C2H2-type 1; atypical" evidence="4">
    <location>
        <begin position="277"/>
        <end position="297"/>
    </location>
</feature>
<feature type="zinc finger region" description="C2H2-type 2" evidence="4">
    <location>
        <begin position="305"/>
        <end position="327"/>
    </location>
</feature>
<feature type="zinc finger region" description="C2H2-type 3" evidence="4">
    <location>
        <begin position="378"/>
        <end position="400"/>
    </location>
</feature>
<feature type="zinc finger region" description="C2H2-type 4" evidence="4">
    <location>
        <begin position="453"/>
        <end position="476"/>
    </location>
</feature>
<feature type="zinc finger region" description="C2H2-type 5" evidence="4">
    <location>
        <begin position="481"/>
        <end position="504"/>
    </location>
</feature>
<feature type="region of interest" description="Disordered" evidence="5">
    <location>
        <begin position="1"/>
        <end position="112"/>
    </location>
</feature>
<feature type="region of interest" description="SNAG domain" evidence="3">
    <location>
        <begin position="1"/>
        <end position="20"/>
    </location>
</feature>
<feature type="region of interest" description="Required and sufficient for interaction with KDM1A" evidence="2">
    <location>
        <begin position="2"/>
        <end position="7"/>
    </location>
</feature>
<feature type="region of interest" description="Necessary for interaction with CCND1" evidence="1">
    <location>
        <begin position="43"/>
        <end position="57"/>
    </location>
</feature>
<feature type="region of interest" description="Disordered" evidence="5">
    <location>
        <begin position="182"/>
        <end position="235"/>
    </location>
</feature>
<feature type="region of interest" description="Disordered" evidence="5">
    <location>
        <begin position="325"/>
        <end position="373"/>
    </location>
</feature>
<feature type="compositionally biased region" description="Basic residues" evidence="5">
    <location>
        <begin position="1"/>
        <end position="12"/>
    </location>
</feature>
<feature type="compositionally biased region" description="Pro residues" evidence="5">
    <location>
        <begin position="43"/>
        <end position="61"/>
    </location>
</feature>
<feature type="compositionally biased region" description="Low complexity" evidence="5">
    <location>
        <begin position="66"/>
        <end position="75"/>
    </location>
</feature>
<feature type="compositionally biased region" description="Low complexity" evidence="5">
    <location>
        <begin position="212"/>
        <end position="228"/>
    </location>
</feature>
<feature type="compositionally biased region" description="Basic and acidic residues" evidence="5">
    <location>
        <begin position="339"/>
        <end position="351"/>
    </location>
</feature>
<keyword id="KW-0131">Cell cycle</keyword>
<keyword id="KW-0217">Developmental protein</keyword>
<keyword id="KW-0221">Differentiation</keyword>
<keyword id="KW-0238">DNA-binding</keyword>
<keyword id="KW-0479">Metal-binding</keyword>
<keyword id="KW-0524">Neurogenesis</keyword>
<keyword id="KW-0539">Nucleus</keyword>
<keyword id="KW-1185">Reference proteome</keyword>
<keyword id="KW-0677">Repeat</keyword>
<keyword id="KW-0678">Repressor</keyword>
<keyword id="KW-0804">Transcription</keyword>
<keyword id="KW-0805">Transcription regulation</keyword>
<keyword id="KW-0862">Zinc</keyword>
<keyword id="KW-0863">Zinc-finger</keyword>
<name>INSM1_BOVIN</name>
<dbReference type="EMBL" id="BC146266">
    <property type="protein sequence ID" value="AAI46267.1"/>
    <property type="molecule type" value="mRNA"/>
</dbReference>
<dbReference type="RefSeq" id="NP_001094700.1">
    <property type="nucleotide sequence ID" value="NM_001101230.1"/>
</dbReference>
<dbReference type="FunCoup" id="A6H7J1">
    <property type="interactions" value="60"/>
</dbReference>
<dbReference type="GeneID" id="100137721"/>
<dbReference type="KEGG" id="bta:100137721"/>
<dbReference type="CTD" id="3642"/>
<dbReference type="eggNOG" id="KOG3993">
    <property type="taxonomic scope" value="Eukaryota"/>
</dbReference>
<dbReference type="InParanoid" id="A6H7J1"/>
<dbReference type="OrthoDB" id="8953942at2759"/>
<dbReference type="Proteomes" id="UP000009136">
    <property type="component" value="Unplaced"/>
</dbReference>
<dbReference type="GO" id="GO:0005634">
    <property type="term" value="C:nucleus"/>
    <property type="evidence" value="ECO:0000250"/>
    <property type="project" value="UniProtKB"/>
</dbReference>
<dbReference type="GO" id="GO:0017053">
    <property type="term" value="C:transcription repressor complex"/>
    <property type="evidence" value="ECO:0000250"/>
    <property type="project" value="UniProtKB"/>
</dbReference>
<dbReference type="GO" id="GO:0031490">
    <property type="term" value="F:chromatin DNA binding"/>
    <property type="evidence" value="ECO:0000250"/>
    <property type="project" value="UniProtKB"/>
</dbReference>
<dbReference type="GO" id="GO:0003700">
    <property type="term" value="F:DNA-binding transcription factor activity"/>
    <property type="evidence" value="ECO:0000250"/>
    <property type="project" value="UniProtKB"/>
</dbReference>
<dbReference type="GO" id="GO:0001227">
    <property type="term" value="F:DNA-binding transcription repressor activity, RNA polymerase II-specific"/>
    <property type="evidence" value="ECO:0000318"/>
    <property type="project" value="GO_Central"/>
</dbReference>
<dbReference type="GO" id="GO:0000978">
    <property type="term" value="F:RNA polymerase II cis-regulatory region sequence-specific DNA binding"/>
    <property type="evidence" value="ECO:0000250"/>
    <property type="project" value="UniProtKB"/>
</dbReference>
<dbReference type="GO" id="GO:0008270">
    <property type="term" value="F:zinc ion binding"/>
    <property type="evidence" value="ECO:0007669"/>
    <property type="project" value="UniProtKB-KW"/>
</dbReference>
<dbReference type="GO" id="GO:0061104">
    <property type="term" value="P:adrenal chromaffin cell differentiation"/>
    <property type="evidence" value="ECO:0000250"/>
    <property type="project" value="UniProtKB"/>
</dbReference>
<dbReference type="GO" id="GO:0008285">
    <property type="term" value="P:negative regulation of cell population proliferation"/>
    <property type="evidence" value="ECO:0000250"/>
    <property type="project" value="UniProtKB"/>
</dbReference>
<dbReference type="GO" id="GO:0001933">
    <property type="term" value="P:negative regulation of protein phosphorylation"/>
    <property type="evidence" value="ECO:0000250"/>
    <property type="project" value="UniProtKB"/>
</dbReference>
<dbReference type="GO" id="GO:0000122">
    <property type="term" value="P:negative regulation of transcription by RNA polymerase II"/>
    <property type="evidence" value="ECO:0000250"/>
    <property type="project" value="UniProtKB"/>
</dbReference>
<dbReference type="GO" id="GO:0030182">
    <property type="term" value="P:neuron differentiation"/>
    <property type="evidence" value="ECO:0000318"/>
    <property type="project" value="GO_Central"/>
</dbReference>
<dbReference type="GO" id="GO:0003358">
    <property type="term" value="P:noradrenergic neuron development"/>
    <property type="evidence" value="ECO:0000250"/>
    <property type="project" value="UniProtKB"/>
</dbReference>
<dbReference type="GO" id="GO:0042421">
    <property type="term" value="P:norepinephrine biosynthetic process"/>
    <property type="evidence" value="ECO:0000250"/>
    <property type="project" value="UniProtKB"/>
</dbReference>
<dbReference type="GO" id="GO:0003310">
    <property type="term" value="P:pancreatic A cell differentiation"/>
    <property type="evidence" value="ECO:0000250"/>
    <property type="project" value="UniProtKB"/>
</dbReference>
<dbReference type="GO" id="GO:0045597">
    <property type="term" value="P:positive regulation of cell differentiation"/>
    <property type="evidence" value="ECO:0000250"/>
    <property type="project" value="UniProtKB"/>
</dbReference>
<dbReference type="GO" id="GO:2000179">
    <property type="term" value="P:positive regulation of neural precursor cell proliferation"/>
    <property type="evidence" value="ECO:0000250"/>
    <property type="project" value="UniProtKB"/>
</dbReference>
<dbReference type="GO" id="GO:0051726">
    <property type="term" value="P:regulation of cell cycle"/>
    <property type="evidence" value="ECO:0000250"/>
    <property type="project" value="UniProtKB"/>
</dbReference>
<dbReference type="GO" id="GO:0010564">
    <property type="term" value="P:regulation of cell cycle process"/>
    <property type="evidence" value="ECO:0000318"/>
    <property type="project" value="GO_Central"/>
</dbReference>
<dbReference type="GO" id="GO:0010468">
    <property type="term" value="P:regulation of gene expression"/>
    <property type="evidence" value="ECO:0000250"/>
    <property type="project" value="UniProtKB"/>
</dbReference>
<dbReference type="GO" id="GO:0043254">
    <property type="term" value="P:regulation of protein-containing complex assembly"/>
    <property type="evidence" value="ECO:0000250"/>
    <property type="project" value="UniProtKB"/>
</dbReference>
<dbReference type="GO" id="GO:0061549">
    <property type="term" value="P:sympathetic ganglion development"/>
    <property type="evidence" value="ECO:0000250"/>
    <property type="project" value="UniProtKB"/>
</dbReference>
<dbReference type="GO" id="GO:0060290">
    <property type="term" value="P:transdifferentiation"/>
    <property type="evidence" value="ECO:0000250"/>
    <property type="project" value="UniProtKB"/>
</dbReference>
<dbReference type="GO" id="GO:0003309">
    <property type="term" value="P:type B pancreatic cell differentiation"/>
    <property type="evidence" value="ECO:0000250"/>
    <property type="project" value="UniProtKB"/>
</dbReference>
<dbReference type="FunFam" id="3.30.160.60:FF:001329">
    <property type="entry name" value="INSM transcriptional repressor 1"/>
    <property type="match status" value="1"/>
</dbReference>
<dbReference type="FunFam" id="3.30.160.60:FF:001458">
    <property type="entry name" value="INSM transcriptional repressor 1"/>
    <property type="match status" value="1"/>
</dbReference>
<dbReference type="FunFam" id="3.30.160.60:FF:002055">
    <property type="entry name" value="INSM transcriptional repressor 1"/>
    <property type="match status" value="1"/>
</dbReference>
<dbReference type="Gene3D" id="3.30.160.60">
    <property type="entry name" value="Classic Zinc Finger"/>
    <property type="match status" value="3"/>
</dbReference>
<dbReference type="InterPro" id="IPR042972">
    <property type="entry name" value="INSM1/2"/>
</dbReference>
<dbReference type="InterPro" id="IPR036236">
    <property type="entry name" value="Znf_C2H2_sf"/>
</dbReference>
<dbReference type="InterPro" id="IPR013087">
    <property type="entry name" value="Znf_C2H2_type"/>
</dbReference>
<dbReference type="PANTHER" id="PTHR15065">
    <property type="entry name" value="INSULINOMA-ASSOCIATED 1"/>
    <property type="match status" value="1"/>
</dbReference>
<dbReference type="PANTHER" id="PTHR15065:SF5">
    <property type="entry name" value="INSULINOMA-ASSOCIATED PROTEIN 1"/>
    <property type="match status" value="1"/>
</dbReference>
<dbReference type="Pfam" id="PF00096">
    <property type="entry name" value="zf-C2H2"/>
    <property type="match status" value="4"/>
</dbReference>
<dbReference type="SMART" id="SM00355">
    <property type="entry name" value="ZnF_C2H2"/>
    <property type="match status" value="5"/>
</dbReference>
<dbReference type="SUPFAM" id="SSF57667">
    <property type="entry name" value="beta-beta-alpha zinc fingers"/>
    <property type="match status" value="3"/>
</dbReference>
<dbReference type="PROSITE" id="PS00028">
    <property type="entry name" value="ZINC_FINGER_C2H2_1"/>
    <property type="match status" value="4"/>
</dbReference>
<dbReference type="PROSITE" id="PS50157">
    <property type="entry name" value="ZINC_FINGER_C2H2_2"/>
    <property type="match status" value="4"/>
</dbReference>
<evidence type="ECO:0000250" key="1"/>
<evidence type="ECO:0000250" key="2">
    <source>
        <dbReference type="UniProtKB" id="Q01101"/>
    </source>
</evidence>
<evidence type="ECO:0000250" key="3">
    <source>
        <dbReference type="UniProtKB" id="Q63ZV0"/>
    </source>
</evidence>
<evidence type="ECO:0000255" key="4">
    <source>
        <dbReference type="PROSITE-ProRule" id="PRU00042"/>
    </source>
</evidence>
<evidence type="ECO:0000256" key="5">
    <source>
        <dbReference type="SAM" id="MobiDB-lite"/>
    </source>
</evidence>
<evidence type="ECO:0000305" key="6"/>
<proteinExistence type="evidence at transcript level"/>
<sequence length="522" mass="53935">MPRGFLVKRSKKSTPVSYRIRGGEDGDRALLLLPGCGGARASPPAPGPGPVPGPLQPPPPTERAHAALAAALACAPGPPPPPPGLRAAHFGNPEAAHPAPLYSPTRPVSREHEKHKYFERSFNLGSPVSAESFPTPAALLVGGGGGGGGGGANGAGGGGTCSGDPLLFAPAELKMGTAFSAAAEAARGPGPGPPLPPAAALRPPGKRPSPPASAAAAAEPPAKVAKAPGSKKPKAIRKLHFEDEVTTSPVLGLKIKEGPVEAPRGRAGGAARPLGEFICQLCKEEYADPFALAQHKCSRIVRVEYRCPECAKVFSCPANLASHRRWHKPRPAPAAARACEPETPARAEAREATGGGGSDRDTPSPGGVSESGSEDGLYECHHCAKKFRRQAYLRKHLLAHHQALQAKGAPPPAPPAEDLLALYPGPDEKVPQEAAGDGEAAGVLGLSASAECHLCPVCGETFPSKGAQERHLRLLHAAQVFPCKYCPATFYSSPGLTRHINKCHPSENRQVILLQVPVRPAC</sequence>
<reference key="1">
    <citation type="submission" date="2007-06" db="EMBL/GenBank/DDBJ databases">
        <authorList>
            <consortium name="NIH - Mammalian Gene Collection (MGC) project"/>
        </authorList>
    </citation>
    <scope>NUCLEOTIDE SEQUENCE [LARGE SCALE MRNA]</scope>
    <source>
        <strain>Hereford</strain>
        <tissue>Fetal pons</tissue>
    </source>
</reference>
<accession>A6H7J1</accession>
<gene>
    <name type="primary">INSM1</name>
    <name type="synonym">IA1</name>
</gene>
<comment type="function">
    <text evidence="2">Sequence-specific DNA-binding transcriptional regulator that plays a key role in neurogenesis and neuroendocrine cell differentiation during embryonic and/or fetal development. Binds to the consensus sequence 5'-[TG][TC][TC][TT][GA]GGG[CG]A-3' in target promoters. Acts as a transcriptional repressor of NEUROD1 and INS expression via its interaction with cyclin CCND1 in a cell cycle-independent manner. Negatively regulates skeletal muscle-specific gene expression in endocrine cells of the pituitary by inhibiting the Notch signaling pathway. Represses target gene transcription by recruiting chromatin-modifying factors, such as HDAC1, HDAC2, HDAC3, KDM1A and RCOR1 histone deacetylases. Binds to its own promoter, suggesting autoregulation as a self-control feedback mechanism. Competes with histone H3 for the same binding site on the histone demethylase complex formed by KDM1A and RCOR1, and thereby inhibits demethylation of histone H3 at 'Lys-4'. Promotes the generation and expansion of neuronal basal progenitor cells in the developing neocortex. Involved in the differentiation of endocrine cells of the developing anterior pituitary gland, of the pancreas and intestine, and of sympatho-adrenal cells in the peripheral nervous system. Promotes cell cycle signaling arrest and inhibition of cellular proliferation.</text>
</comment>
<comment type="subunit">
    <text evidence="2 3">Interacts (via the N-terminal region) with CCND1 (via cyclin N-terminal domain); the interaction competes with the binding of CCND1 to CDK4 during cell cycle progression and increases its transcriptional repressor activity. Interacts with HDAC3; the interaction increases its transcriptional repressor activity. Interacts (via the SNAG domain) with HDAC1. Interacts (via the SNAG domain) with HDAC2. Interacts (via the SNAG domain) with KDM1A. Interacts (via the SNAG domain) with RCOR1. Interacts with SORBS1.</text>
</comment>
<comment type="subcellular location">
    <subcellularLocation>
        <location evidence="3">Nucleus</location>
    </subcellularLocation>
</comment>
<comment type="domain">
    <text evidence="1">The C-terminal region is necessary for NEUROD1 promoter DNA-binding and transcriptional repressor activity.</text>
</comment>
<comment type="similarity">
    <text evidence="6">Belongs to the INSM1 family.</text>
</comment>
<protein>
    <recommendedName>
        <fullName>Insulinoma-associated protein 1</fullName>
    </recommendedName>
    <alternativeName>
        <fullName>Zinc finger protein IA-1</fullName>
    </alternativeName>
</protein>
<organism>
    <name type="scientific">Bos taurus</name>
    <name type="common">Bovine</name>
    <dbReference type="NCBI Taxonomy" id="9913"/>
    <lineage>
        <taxon>Eukaryota</taxon>
        <taxon>Metazoa</taxon>
        <taxon>Chordata</taxon>
        <taxon>Craniata</taxon>
        <taxon>Vertebrata</taxon>
        <taxon>Euteleostomi</taxon>
        <taxon>Mammalia</taxon>
        <taxon>Eutheria</taxon>
        <taxon>Laurasiatheria</taxon>
        <taxon>Artiodactyla</taxon>
        <taxon>Ruminantia</taxon>
        <taxon>Pecora</taxon>
        <taxon>Bovidae</taxon>
        <taxon>Bovinae</taxon>
        <taxon>Bos</taxon>
    </lineage>
</organism>